<protein>
    <recommendedName>
        <fullName evidence="1">Large ribosomal subunit protein bL36</fullName>
    </recommendedName>
    <alternativeName>
        <fullName evidence="2">50S ribosomal protein L36</fullName>
    </alternativeName>
</protein>
<sequence>MKVRASVKKICRNCKIVKRSGVVRVICVEPKHKQRQG</sequence>
<reference key="1">
    <citation type="submission" date="2006-09" db="EMBL/GenBank/DDBJ databases">
        <title>Complete sequence of chromosome 1 of Shewanella sp. ANA-3.</title>
        <authorList>
            <person name="Copeland A."/>
            <person name="Lucas S."/>
            <person name="Lapidus A."/>
            <person name="Barry K."/>
            <person name="Detter J.C."/>
            <person name="Glavina del Rio T."/>
            <person name="Hammon N."/>
            <person name="Israni S."/>
            <person name="Dalin E."/>
            <person name="Tice H."/>
            <person name="Pitluck S."/>
            <person name="Chertkov O."/>
            <person name="Brettin T."/>
            <person name="Bruce D."/>
            <person name="Han C."/>
            <person name="Tapia R."/>
            <person name="Gilna P."/>
            <person name="Schmutz J."/>
            <person name="Larimer F."/>
            <person name="Land M."/>
            <person name="Hauser L."/>
            <person name="Kyrpides N."/>
            <person name="Kim E."/>
            <person name="Newman D."/>
            <person name="Salticov C."/>
            <person name="Konstantinidis K."/>
            <person name="Klappenback J."/>
            <person name="Tiedje J."/>
            <person name="Richardson P."/>
        </authorList>
    </citation>
    <scope>NUCLEOTIDE SEQUENCE [LARGE SCALE GENOMIC DNA]</scope>
    <source>
        <strain>ANA-3</strain>
    </source>
</reference>
<accession>A0KRP5</accession>
<dbReference type="EMBL" id="CP000469">
    <property type="protein sequence ID" value="ABK46464.1"/>
    <property type="molecule type" value="Genomic_DNA"/>
</dbReference>
<dbReference type="RefSeq" id="WP_006083579.1">
    <property type="nucleotide sequence ID" value="NC_008577.1"/>
</dbReference>
<dbReference type="SMR" id="A0KRP5"/>
<dbReference type="STRING" id="94122.Shewana3_0220"/>
<dbReference type="GeneID" id="94726207"/>
<dbReference type="KEGG" id="shn:Shewana3_0220"/>
<dbReference type="eggNOG" id="COG0257">
    <property type="taxonomic scope" value="Bacteria"/>
</dbReference>
<dbReference type="HOGENOM" id="CLU_135723_6_2_6"/>
<dbReference type="OrthoDB" id="9802520at2"/>
<dbReference type="Proteomes" id="UP000002589">
    <property type="component" value="Chromosome"/>
</dbReference>
<dbReference type="GO" id="GO:0005737">
    <property type="term" value="C:cytoplasm"/>
    <property type="evidence" value="ECO:0007669"/>
    <property type="project" value="UniProtKB-ARBA"/>
</dbReference>
<dbReference type="GO" id="GO:1990904">
    <property type="term" value="C:ribonucleoprotein complex"/>
    <property type="evidence" value="ECO:0007669"/>
    <property type="project" value="UniProtKB-KW"/>
</dbReference>
<dbReference type="GO" id="GO:0005840">
    <property type="term" value="C:ribosome"/>
    <property type="evidence" value="ECO:0007669"/>
    <property type="project" value="UniProtKB-KW"/>
</dbReference>
<dbReference type="GO" id="GO:0003735">
    <property type="term" value="F:structural constituent of ribosome"/>
    <property type="evidence" value="ECO:0007669"/>
    <property type="project" value="InterPro"/>
</dbReference>
<dbReference type="GO" id="GO:0006412">
    <property type="term" value="P:translation"/>
    <property type="evidence" value="ECO:0007669"/>
    <property type="project" value="UniProtKB-UniRule"/>
</dbReference>
<dbReference type="HAMAP" id="MF_00251">
    <property type="entry name" value="Ribosomal_bL36"/>
    <property type="match status" value="1"/>
</dbReference>
<dbReference type="InterPro" id="IPR000473">
    <property type="entry name" value="Ribosomal_bL36"/>
</dbReference>
<dbReference type="InterPro" id="IPR035977">
    <property type="entry name" value="Ribosomal_bL36_sp"/>
</dbReference>
<dbReference type="NCBIfam" id="TIGR01022">
    <property type="entry name" value="rpmJ_bact"/>
    <property type="match status" value="1"/>
</dbReference>
<dbReference type="PANTHER" id="PTHR42888">
    <property type="entry name" value="50S RIBOSOMAL PROTEIN L36, CHLOROPLASTIC"/>
    <property type="match status" value="1"/>
</dbReference>
<dbReference type="PANTHER" id="PTHR42888:SF1">
    <property type="entry name" value="LARGE RIBOSOMAL SUBUNIT PROTEIN BL36C"/>
    <property type="match status" value="1"/>
</dbReference>
<dbReference type="Pfam" id="PF00444">
    <property type="entry name" value="Ribosomal_L36"/>
    <property type="match status" value="1"/>
</dbReference>
<dbReference type="SUPFAM" id="SSF57840">
    <property type="entry name" value="Ribosomal protein L36"/>
    <property type="match status" value="1"/>
</dbReference>
<dbReference type="PROSITE" id="PS00828">
    <property type="entry name" value="RIBOSOMAL_L36"/>
    <property type="match status" value="1"/>
</dbReference>
<organism>
    <name type="scientific">Shewanella sp. (strain ANA-3)</name>
    <dbReference type="NCBI Taxonomy" id="94122"/>
    <lineage>
        <taxon>Bacteria</taxon>
        <taxon>Pseudomonadati</taxon>
        <taxon>Pseudomonadota</taxon>
        <taxon>Gammaproteobacteria</taxon>
        <taxon>Alteromonadales</taxon>
        <taxon>Shewanellaceae</taxon>
        <taxon>Shewanella</taxon>
    </lineage>
</organism>
<feature type="chain" id="PRO_0000302292" description="Large ribosomal subunit protein bL36">
    <location>
        <begin position="1"/>
        <end position="37"/>
    </location>
</feature>
<evidence type="ECO:0000255" key="1">
    <source>
        <dbReference type="HAMAP-Rule" id="MF_00251"/>
    </source>
</evidence>
<evidence type="ECO:0000305" key="2"/>
<proteinExistence type="inferred from homology"/>
<keyword id="KW-0687">Ribonucleoprotein</keyword>
<keyword id="KW-0689">Ribosomal protein</keyword>
<gene>
    <name evidence="1" type="primary">rpmJ</name>
    <name type="ordered locus">Shewana3_0220</name>
</gene>
<comment type="similarity">
    <text evidence="1">Belongs to the bacterial ribosomal protein bL36 family.</text>
</comment>
<name>RL36_SHESA</name>